<sequence>MNILSFIVYYNGEINRIYFNMGQKNSFPMKVSTIEFLNRLSNEPILEISNETTNILKLSINSLESNNNLIDLSKLTLNSIITLN</sequence>
<feature type="chain" id="PRO_0000352478" description="Putative uncharacterized protein DDB_G0280023">
    <location>
        <begin position="1"/>
        <end position="84"/>
    </location>
</feature>
<dbReference type="EMBL" id="AAFI02000035">
    <property type="protein sequence ID" value="EAL67483.2"/>
    <property type="molecule type" value="Genomic_DNA"/>
</dbReference>
<dbReference type="RefSeq" id="XP_641446.2">
    <property type="nucleotide sequence ID" value="XM_636354.2"/>
</dbReference>
<dbReference type="PaxDb" id="44689-DDB0218213"/>
<dbReference type="EnsemblProtists" id="EAL67483">
    <property type="protein sequence ID" value="EAL67483"/>
    <property type="gene ID" value="DDB_G0280023"/>
</dbReference>
<dbReference type="GeneID" id="8622331"/>
<dbReference type="KEGG" id="ddi:DDB_G0280023"/>
<dbReference type="dictyBase" id="DDB_G0280023"/>
<dbReference type="VEuPathDB" id="AmoebaDB:DDB_G0280023"/>
<dbReference type="HOGENOM" id="CLU_2532194_0_0_1"/>
<dbReference type="InParanoid" id="Q54W04"/>
<dbReference type="PRO" id="PR:Q54W04"/>
<dbReference type="Proteomes" id="UP000002195">
    <property type="component" value="Chromosome 3"/>
</dbReference>
<proteinExistence type="predicted"/>
<protein>
    <recommendedName>
        <fullName>Putative uncharacterized protein DDB_G0280023</fullName>
    </recommendedName>
</protein>
<accession>Q54W04</accession>
<keyword id="KW-1185">Reference proteome</keyword>
<name>Y8213_DICDI</name>
<organism>
    <name type="scientific">Dictyostelium discoideum</name>
    <name type="common">Social amoeba</name>
    <dbReference type="NCBI Taxonomy" id="44689"/>
    <lineage>
        <taxon>Eukaryota</taxon>
        <taxon>Amoebozoa</taxon>
        <taxon>Evosea</taxon>
        <taxon>Eumycetozoa</taxon>
        <taxon>Dictyostelia</taxon>
        <taxon>Dictyosteliales</taxon>
        <taxon>Dictyosteliaceae</taxon>
        <taxon>Dictyostelium</taxon>
    </lineage>
</organism>
<reference key="1">
    <citation type="journal article" date="2005" name="Nature">
        <title>The genome of the social amoeba Dictyostelium discoideum.</title>
        <authorList>
            <person name="Eichinger L."/>
            <person name="Pachebat J.A."/>
            <person name="Gloeckner G."/>
            <person name="Rajandream M.A."/>
            <person name="Sucgang R."/>
            <person name="Berriman M."/>
            <person name="Song J."/>
            <person name="Olsen R."/>
            <person name="Szafranski K."/>
            <person name="Xu Q."/>
            <person name="Tunggal B."/>
            <person name="Kummerfeld S."/>
            <person name="Madera M."/>
            <person name="Konfortov B.A."/>
            <person name="Rivero F."/>
            <person name="Bankier A.T."/>
            <person name="Lehmann R."/>
            <person name="Hamlin N."/>
            <person name="Davies R."/>
            <person name="Gaudet P."/>
            <person name="Fey P."/>
            <person name="Pilcher K."/>
            <person name="Chen G."/>
            <person name="Saunders D."/>
            <person name="Sodergren E.J."/>
            <person name="Davis P."/>
            <person name="Kerhornou A."/>
            <person name="Nie X."/>
            <person name="Hall N."/>
            <person name="Anjard C."/>
            <person name="Hemphill L."/>
            <person name="Bason N."/>
            <person name="Farbrother P."/>
            <person name="Desany B."/>
            <person name="Just E."/>
            <person name="Morio T."/>
            <person name="Rost R."/>
            <person name="Churcher C.M."/>
            <person name="Cooper J."/>
            <person name="Haydock S."/>
            <person name="van Driessche N."/>
            <person name="Cronin A."/>
            <person name="Goodhead I."/>
            <person name="Muzny D.M."/>
            <person name="Mourier T."/>
            <person name="Pain A."/>
            <person name="Lu M."/>
            <person name="Harper D."/>
            <person name="Lindsay R."/>
            <person name="Hauser H."/>
            <person name="James K.D."/>
            <person name="Quiles M."/>
            <person name="Madan Babu M."/>
            <person name="Saito T."/>
            <person name="Buchrieser C."/>
            <person name="Wardroper A."/>
            <person name="Felder M."/>
            <person name="Thangavelu M."/>
            <person name="Johnson D."/>
            <person name="Knights A."/>
            <person name="Loulseged H."/>
            <person name="Mungall K.L."/>
            <person name="Oliver K."/>
            <person name="Price C."/>
            <person name="Quail M.A."/>
            <person name="Urushihara H."/>
            <person name="Hernandez J."/>
            <person name="Rabbinowitsch E."/>
            <person name="Steffen D."/>
            <person name="Sanders M."/>
            <person name="Ma J."/>
            <person name="Kohara Y."/>
            <person name="Sharp S."/>
            <person name="Simmonds M.N."/>
            <person name="Spiegler S."/>
            <person name="Tivey A."/>
            <person name="Sugano S."/>
            <person name="White B."/>
            <person name="Walker D."/>
            <person name="Woodward J.R."/>
            <person name="Winckler T."/>
            <person name="Tanaka Y."/>
            <person name="Shaulsky G."/>
            <person name="Schleicher M."/>
            <person name="Weinstock G.M."/>
            <person name="Rosenthal A."/>
            <person name="Cox E.C."/>
            <person name="Chisholm R.L."/>
            <person name="Gibbs R.A."/>
            <person name="Loomis W.F."/>
            <person name="Platzer M."/>
            <person name="Kay R.R."/>
            <person name="Williams J.G."/>
            <person name="Dear P.H."/>
            <person name="Noegel A.A."/>
            <person name="Barrell B.G."/>
            <person name="Kuspa A."/>
        </authorList>
    </citation>
    <scope>NUCLEOTIDE SEQUENCE [LARGE SCALE GENOMIC DNA]</scope>
    <source>
        <strain>AX4</strain>
    </source>
</reference>
<gene>
    <name type="ORF">DDB_G0280023</name>
</gene>